<proteinExistence type="evidence at protein level"/>
<dbReference type="EMBL" id="LT160067">
    <property type="protein sequence ID" value="CYN62268.1"/>
    <property type="molecule type" value="mRNA"/>
</dbReference>
<dbReference type="EMBL" id="DS027694">
    <property type="protein sequence ID" value="EAW20253.1"/>
    <property type="molecule type" value="Genomic_DNA"/>
</dbReference>
<dbReference type="RefSeq" id="XP_001262150.1">
    <property type="nucleotide sequence ID" value="XM_001262149.1"/>
</dbReference>
<dbReference type="EnsemblFungi" id="EAW20253">
    <property type="protein sequence ID" value="EAW20253"/>
    <property type="gene ID" value="NFIA_098870"/>
</dbReference>
<dbReference type="GeneID" id="4588780"/>
<dbReference type="KEGG" id="nfi:NFIA_098870"/>
<dbReference type="VEuPathDB" id="FungiDB:NFIA_098870"/>
<dbReference type="eggNOG" id="ENOG502SU90">
    <property type="taxonomic scope" value="Eukaryota"/>
</dbReference>
<dbReference type="HOGENOM" id="CLU_174978_0_0_1"/>
<dbReference type="OMA" id="CPNNCKH"/>
<dbReference type="OrthoDB" id="4466885at2759"/>
<dbReference type="Proteomes" id="UP000006702">
    <property type="component" value="Unassembled WGS sequence"/>
</dbReference>
<accession>A1DBL3</accession>
<accession>A0A1D0CRT2</accession>
<reference key="1">
    <citation type="journal article" date="2016" name="AMB Express">
        <title>NFAP2, a novel cysteine-rich anti-yeast protein from Neosartorya fischeri NRRL 181: isolation and characterization.</title>
        <authorList>
            <person name="Toth L."/>
            <person name="Kele Z."/>
            <person name="Borics A."/>
            <person name="Nagy L.G."/>
            <person name="Varadi G."/>
            <person name="Viragh M."/>
            <person name="Tako M."/>
            <person name="Vagvolgyi C."/>
            <person name="Galgoczy L."/>
        </authorList>
    </citation>
    <scope>NUCLEOTIDE SEQUENCE [MRNA]</scope>
    <scope>FUNCTION</scope>
    <scope>SUBCELLULAR LOCATION</scope>
    <scope>DISULFIDE BOND</scope>
    <scope>BIOTECHNOLOGY</scope>
    <source>
        <strain>ATCC 1020 / DSM 3700 / CBS 544.65 / FGSC A1164 / JCM 1740 / NRRL 181 / WB 181</strain>
    </source>
</reference>
<reference key="2">
    <citation type="journal article" date="2008" name="PLoS Genet.">
        <title>Genomic islands in the pathogenic filamentous fungus Aspergillus fumigatus.</title>
        <authorList>
            <person name="Fedorova N.D."/>
            <person name="Khaldi N."/>
            <person name="Joardar V.S."/>
            <person name="Maiti R."/>
            <person name="Amedeo P."/>
            <person name="Anderson M.J."/>
            <person name="Crabtree J."/>
            <person name="Silva J.C."/>
            <person name="Badger J.H."/>
            <person name="Albarraq A."/>
            <person name="Angiuoli S."/>
            <person name="Bussey H."/>
            <person name="Bowyer P."/>
            <person name="Cotty P.J."/>
            <person name="Dyer P.S."/>
            <person name="Egan A."/>
            <person name="Galens K."/>
            <person name="Fraser-Liggett C.M."/>
            <person name="Haas B.J."/>
            <person name="Inman J.M."/>
            <person name="Kent R."/>
            <person name="Lemieux S."/>
            <person name="Malavazi I."/>
            <person name="Orvis J."/>
            <person name="Roemer T."/>
            <person name="Ronning C.M."/>
            <person name="Sundaram J.P."/>
            <person name="Sutton G."/>
            <person name="Turner G."/>
            <person name="Venter J.C."/>
            <person name="White O.R."/>
            <person name="Whitty B.R."/>
            <person name="Youngman P."/>
            <person name="Wolfe K.H."/>
            <person name="Goldman G.H."/>
            <person name="Wortman J.R."/>
            <person name="Jiang B."/>
            <person name="Denning D.W."/>
            <person name="Nierman W.C."/>
        </authorList>
    </citation>
    <scope>NUCLEOTIDE SEQUENCE [LARGE SCALE GENOMIC DNA]</scope>
    <source>
        <strain>ATCC 1020 / DSM 3700 / CBS 544.65 / FGSC A1164 / JCM 1740 / NRRL 181 / WB 181</strain>
    </source>
</reference>
<reference key="3">
    <citation type="journal article" date="2018" name="Front. Microbiol.">
        <title>Anti-Candidal Activity and Functional Mapping of Recombinant and Synthetic Neosartorya fischeri Antifungal Protein 2 (NFAP2).</title>
        <authorList>
            <person name="Toth L."/>
            <person name="Varadi G."/>
            <person name="Borics A."/>
            <person name="Batta G."/>
            <person name="Kele Z."/>
            <person name="Vendrinszky A."/>
            <person name="Toth R."/>
            <person name="Ficze H."/>
            <person name="Toth G.K."/>
            <person name="Vagvoelgyi C."/>
            <person name="Marx F."/>
            <person name="Galgoczy L."/>
        </authorList>
    </citation>
    <scope>FUNCTION</scope>
    <scope>BIOTECHNOLOGY</scope>
</reference>
<reference key="4">
    <citation type="journal article" date="2019" name="Antimicrob. Agents Chemother.">
        <title>In vivo applicability of Neosartorya fischeri antifungal protein 2 (NFAP2) in treatment of vulvovaginal candidiasis.</title>
        <authorList>
            <person name="Kovacs R."/>
            <person name="Holzknecht J."/>
            <person name="Hargitai Z."/>
            <person name="Papp C."/>
            <person name="Farkas A."/>
            <person name="Borics A."/>
            <person name="Toth L."/>
            <person name="Varadi G."/>
            <person name="Toth G.K."/>
            <person name="Kovacs I."/>
            <person name="Dubrac S."/>
            <person name="Majoros L."/>
            <person name="Marx F."/>
            <person name="Galgoczy L."/>
        </authorList>
    </citation>
    <scope>FUNCTION</scope>
    <scope>BIOTECHNOLOGY</scope>
</reference>
<reference key="5">
    <citation type="journal article" date="2021" name="Int. J. Mol. Sci.">
        <title>The Neosartorya fischeri Antifungal Protein 2 (NFAP2): A New Potential Weapon against Multidrug-Resistant Candida auris Biofilms.</title>
        <authorList>
            <person name="Kovacs R."/>
            <person name="Nagy F."/>
            <person name="Toth Z."/>
            <person name="Forgacs L."/>
            <person name="Toth L."/>
            <person name="Varadi G."/>
            <person name="Toth G.K."/>
            <person name="Vadaszi K."/>
            <person name="Borman A.M."/>
            <person name="Majoros L."/>
            <person name="Galgoczy L."/>
        </authorList>
    </citation>
    <scope>FUNCTION</scope>
    <scope>BIOTECHNOLOGY</scope>
</reference>
<reference key="6">
    <citation type="journal article" date="2021" name="J. Fungi">
        <title>Potential of antifungal proteins (AFPs) to control Penicillium postharvest fruit decay.</title>
        <authorList>
            <person name="Gandia M."/>
            <person name="Kakar A."/>
            <person name="Giner-Llorca M."/>
            <person name="Holzknecht J."/>
            <person name="Martinez-Culebras P."/>
            <person name="Galgoczy L."/>
            <person name="Marx F."/>
            <person name="Marcos J.F."/>
            <person name="Manzanares P."/>
        </authorList>
    </citation>
    <scope>FUNCTION</scope>
    <scope>BIOTECHNOLOGY</scope>
</reference>
<reference key="7">
    <citation type="journal article" date="2022" name="BioControl">
        <title>The combination of Neosartorya (Aspergillus) fischeri antifungal proteins with rationally designed gamma-core peptide derivatives is effective for plant and crop protection.</title>
        <authorList>
            <person name="Toth L."/>
            <person name="Poor P."/>
            <person name="Oerdoeg A."/>
            <person name="Varadi G."/>
            <person name="Farkas A."/>
            <person name="Papp C."/>
            <person name="Bende G."/>
            <person name="Toth G.K."/>
            <person name="Rakhely G."/>
            <person name="Marx F."/>
            <person name="Galgoczy L."/>
        </authorList>
    </citation>
    <scope>FUNCTION</scope>
    <scope>BIOTECHNOLOGY</scope>
</reference>
<reference key="8">
    <citation type="journal article" date="2023" name="Protein Sci.">
        <title>Hard nut to crack: Solving the disulfide linkage pattern of the Neosartorya (Aspergillus) fischeri antifungal protein 2.</title>
        <authorList>
            <person name="Varadi G."/>
            <person name="Kele Z."/>
            <person name="Czajlik A."/>
            <person name="Borics A."/>
            <person name="Bende G."/>
            <person name="Papp C."/>
            <person name="Rakhely G."/>
            <person name="Toth G.K."/>
            <person name="Batta G."/>
            <person name="Galgoczy L."/>
        </authorList>
    </citation>
    <scope>DOMAIN</scope>
    <scope>DISULFIDE BOND</scope>
</reference>
<reference key="9">
    <citation type="journal article" date="2024" name="J. Chem. Inf. Model.">
        <title>Mapping of the Lipid-Binding Regions of the Antifungal Protein NFAP2 by Exploiting Model Membranes.</title>
        <authorList>
            <person name="Pavela O."/>
            <person name="Juhasz T."/>
            <person name="Toth L."/>
            <person name="Czajlik A."/>
            <person name="Batta G."/>
            <person name="Galgoczy L."/>
            <person name="Beke-Somfai T."/>
        </authorList>
    </citation>
    <scope>FUNCTION</scope>
    <scope>DOMAIN</scope>
    <scope>LIPID-BINDING</scope>
</reference>
<reference key="10">
    <citation type="journal article" date="2025" name="Microbiol. Spectr.">
        <title>The Neosartorya (Aspergillus) fischeri antifungal protein NFAP2 has low potential to trigger resistance development in Candida albicans in vitro.</title>
        <authorList>
            <person name="Bende G."/>
            <person name="Zsindely N."/>
            <person name="Laczi K."/>
            <person name="Kristoffy Z."/>
            <person name="Papp C."/>
            <person name="Farkas A."/>
            <person name="Toth L."/>
            <person name="Saringer S."/>
            <person name="Bodai L."/>
            <person name="Rakhely G."/>
            <person name="Marx F."/>
            <person name="Galgoczy L."/>
        </authorList>
    </citation>
    <scope>FUNCTION</scope>
    <scope>BIOTECHNOLOGY</scope>
</reference>
<feature type="signal peptide" evidence="1">
    <location>
        <begin position="1"/>
        <end position="21"/>
    </location>
</feature>
<feature type="chain" id="PRO_5002634251" description="Antifungal protein 2">
    <location>
        <begin position="22"/>
        <end position="86"/>
    </location>
</feature>
<feature type="region of interest" description="Lipid-binding" evidence="9">
    <location>
        <begin position="44"/>
        <end position="54"/>
    </location>
</feature>
<feature type="short sequence motif" description="Gamma-core" evidence="8">
    <location>
        <begin position="72"/>
        <end position="83"/>
    </location>
</feature>
<feature type="disulfide bond" evidence="2 8">
    <location>
        <begin position="43"/>
        <end position="57"/>
    </location>
</feature>
<feature type="disulfide bond" evidence="2 8">
    <location>
        <begin position="45"/>
        <end position="74"/>
    </location>
</feature>
<feature type="disulfide bond" evidence="2 8">
    <location>
        <begin position="49"/>
        <end position="83"/>
    </location>
</feature>
<name>NFAP2_NEOFI</name>
<organism>
    <name type="scientific">Neosartorya fischeri (strain ATCC 1020 / DSM 3700 / CBS 544.65 / FGSC A1164 / JCM 1740 / NRRL 181 / WB 181)</name>
    <name type="common">Aspergillus fischerianus</name>
    <dbReference type="NCBI Taxonomy" id="331117"/>
    <lineage>
        <taxon>Eukaryota</taxon>
        <taxon>Fungi</taxon>
        <taxon>Dikarya</taxon>
        <taxon>Ascomycota</taxon>
        <taxon>Pezizomycotina</taxon>
        <taxon>Eurotiomycetes</taxon>
        <taxon>Eurotiomycetidae</taxon>
        <taxon>Eurotiales</taxon>
        <taxon>Aspergillaceae</taxon>
        <taxon>Aspergillus</taxon>
        <taxon>Aspergillus subgen. Fumigati</taxon>
    </lineage>
</organism>
<protein>
    <recommendedName>
        <fullName evidence="11">Antifungal protein 2</fullName>
    </recommendedName>
</protein>
<keyword id="KW-0929">Antimicrobial</keyword>
<keyword id="KW-1015">Disulfide bond</keyword>
<keyword id="KW-1185">Reference proteome</keyword>
<keyword id="KW-0964">Secreted</keyword>
<keyword id="KW-0732">Signal</keyword>
<sequence length="86" mass="9011">MHLSTALFSAIALLAATQVIGASVEVPRDVAAIQIATSPYYACNCPNNCKHKKGSGCKYHSGPSDKSKVISGKCEWQGGQLNCIAT</sequence>
<evidence type="ECO:0000255" key="1"/>
<evidence type="ECO:0000269" key="2">
    <source>
    </source>
</evidence>
<evidence type="ECO:0000269" key="3">
    <source>
    </source>
</evidence>
<evidence type="ECO:0000269" key="4">
    <source>
    </source>
</evidence>
<evidence type="ECO:0000269" key="5">
    <source>
    </source>
</evidence>
<evidence type="ECO:0000269" key="6">
    <source>
    </source>
</evidence>
<evidence type="ECO:0000269" key="7">
    <source>
    </source>
</evidence>
<evidence type="ECO:0000269" key="8">
    <source>
    </source>
</evidence>
<evidence type="ECO:0000269" key="9">
    <source>
    </source>
</evidence>
<evidence type="ECO:0000269" key="10">
    <source>
    </source>
</evidence>
<evidence type="ECO:0000303" key="11">
    <source>
    </source>
</evidence>
<evidence type="ECO:0000303" key="12">
    <source>
    </source>
</evidence>
<comment type="function">
    <text evidence="2 3 4 5 6 7 9 10">Cysteine-rich antifungal protein highly effective against yeasts such as clinically relevant Candida species, including the multidrug-resistant pathogen Candida auris (PubMed:27637945, PubMed:29563903, PubMed:30478163, PubMed:33466640, PubMed:34199956, PubMed:35463117, PubMed:39560388). Does not cause metabolic inactivity and apoptosis induction, but the fungal cell-killing activity is connected to its pore-forming ability in the cell membrane (PubMed:27637945, PubMed:30478163, PubMed:39150323). NFAP2 has a low potential to trigger resistance in C.albicans in vitro, and the developed tolerance to NFAP2 is not associated with severe phenotypic changes compared with development of resistance to generic fluconazole (PubMed:39560388).</text>
</comment>
<comment type="subcellular location">
    <subcellularLocation>
        <location evidence="2">Secreted</location>
    </subcellularLocation>
</comment>
<comment type="domain">
    <text evidence="9">The lipid-binding region (residues 44 to 54) shows potency to insert into the lipid bilayer, where the disulfide bond-stabilized short motif CPNNC could play a key role. In addition, several areas, including the beginning of the N-terminal (residues 1-8), play roles in facilitating initial membrane contacts.</text>
</comment>
<comment type="domain">
    <text evidence="8">The gamma-core motif is essential for the formation of the biologically active three-dimensional structure, and that its modulation is not an efficient tool to improve the antifungal efficacy or to change the antifungal spectrum of NFAP2.</text>
</comment>
<comment type="biotechnology">
    <text evidence="2 3 4 5 6 7 10">NFAP2 provides a feasible base for the development of a fundamental new, safely applicable mono- or polytherapeutic topical agent for the treatment of superficial candidiasis (PubMed:27637945, PubMed:29563903, PubMed:30478163, PubMed:33466640). Moreover, thanks to the slow emergence of NFAP2-resistant Candida strains, NFAP2 can reliably be used long-term in the clinic (PubMed:39560388). The combination of NFAP2 and rationally designed antifungal peptide derivatives (PDs) as biofungicide can also be used for the fungal infection control in plants and crops as well as in postharvest fruit protection (PubMed:34199956, PubMed:35463117).</text>
</comment>
<gene>
    <name evidence="12" type="primary">nfap2</name>
    <name type="ORF">NFIA_098870</name>
</gene>